<accession>Q08297</accession>
<accession>Q3UAY5</accession>
<keyword id="KW-0007">Acetylation</keyword>
<keyword id="KW-0067">ATP-binding</keyword>
<keyword id="KW-0158">Chromosome</keyword>
<keyword id="KW-0963">Cytoplasm</keyword>
<keyword id="KW-0206">Cytoskeleton</keyword>
<keyword id="KW-0227">DNA damage</keyword>
<keyword id="KW-0233">DNA recombination</keyword>
<keyword id="KW-0234">DNA repair</keyword>
<keyword id="KW-0238">DNA-binding</keyword>
<keyword id="KW-1017">Isopeptide bond</keyword>
<keyword id="KW-0496">Mitochondrion</keyword>
<keyword id="KW-0547">Nucleotide-binding</keyword>
<keyword id="KW-0539">Nucleus</keyword>
<keyword id="KW-0597">Phosphoprotein</keyword>
<keyword id="KW-1185">Reference proteome</keyword>
<keyword id="KW-0832">Ubl conjugation</keyword>
<evidence type="ECO:0000250" key="1">
    <source>
        <dbReference type="UniProtKB" id="Q06609"/>
    </source>
</evidence>
<evidence type="ECO:0000255" key="2"/>
<evidence type="ECO:0000256" key="3">
    <source>
        <dbReference type="SAM" id="MobiDB-lite"/>
    </source>
</evidence>
<evidence type="ECO:0000269" key="4">
    <source>
    </source>
</evidence>
<evidence type="ECO:0000269" key="5">
    <source>
    </source>
</evidence>
<evidence type="ECO:0000269" key="6">
    <source>
    </source>
</evidence>
<evidence type="ECO:0000269" key="7">
    <source>
    </source>
</evidence>
<evidence type="ECO:0000269" key="8">
    <source>
    </source>
</evidence>
<evidence type="ECO:0000269" key="9">
    <source>
    </source>
</evidence>
<evidence type="ECO:0000269" key="10">
    <source>
    </source>
</evidence>
<evidence type="ECO:0000269" key="11">
    <source>
    </source>
</evidence>
<evidence type="ECO:0000269" key="12">
    <source>
    </source>
</evidence>
<evidence type="ECO:0000269" key="13">
    <source>
    </source>
</evidence>
<evidence type="ECO:0000269" key="14">
    <source>
    </source>
</evidence>
<evidence type="ECO:0000269" key="15">
    <source>
    </source>
</evidence>
<evidence type="ECO:0000269" key="16">
    <source>
    </source>
</evidence>
<evidence type="ECO:0000305" key="17"/>
<evidence type="ECO:0000312" key="18">
    <source>
        <dbReference type="MGI" id="MGI:97890"/>
    </source>
</evidence>
<sequence length="339" mass="36971">MAMQMQLEASADTSVEEESFGPQPISRLEQCGINANDVKKLEEAGYHTVEAVAYAPKKELINIKGISEAKADKILTEAAKLVPMGFTTATEFHQRRSEIIQITTGSKELDKLLQGGIETGSITEMFGEFRTGKTQICHTLAVTCQLPIDRGGGEGKAMYIDTEGTFRPERLLAVAERYGLSGSDVLDNVAYARGFNTDHQTQLLYQASAMMVESRYALLIVDSATALYRTDYSGRGELSARQMHLARFLRMLLRLADEFGVAVVITNQVVAQVDGAAMFAADPKKPIGGNIIAHASTTRLYLRKGRGETRICKIYDSPCLPEAEAMFAINADGVGDAKD</sequence>
<dbReference type="EMBL" id="D13473">
    <property type="protein sequence ID" value="BAA02718.1"/>
    <property type="molecule type" value="mRNA"/>
</dbReference>
<dbReference type="EMBL" id="D13803">
    <property type="protein sequence ID" value="BAA02961.1"/>
    <property type="molecule type" value="mRNA"/>
</dbReference>
<dbReference type="EMBL" id="AK011242">
    <property type="protein sequence ID" value="BAB27489.1"/>
    <property type="molecule type" value="mRNA"/>
</dbReference>
<dbReference type="EMBL" id="AK076468">
    <property type="protein sequence ID" value="BAC36357.1"/>
    <property type="molecule type" value="mRNA"/>
</dbReference>
<dbReference type="EMBL" id="AK151157">
    <property type="protein sequence ID" value="BAE30162.1"/>
    <property type="molecule type" value="mRNA"/>
</dbReference>
<dbReference type="EMBL" id="AK151177">
    <property type="protein sequence ID" value="BAE30179.1"/>
    <property type="molecule type" value="mRNA"/>
</dbReference>
<dbReference type="EMBL" id="BC027384">
    <property type="protein sequence ID" value="AAH27384.1"/>
    <property type="molecule type" value="mRNA"/>
</dbReference>
<dbReference type="CCDS" id="CCDS16590.1"/>
<dbReference type="PIR" id="A48221">
    <property type="entry name" value="A48221"/>
</dbReference>
<dbReference type="RefSeq" id="NP_035364.1">
    <property type="nucleotide sequence ID" value="NM_011234.5"/>
</dbReference>
<dbReference type="BMRB" id="Q08297"/>
<dbReference type="SMR" id="Q08297"/>
<dbReference type="BioGRID" id="202564">
    <property type="interactions" value="16"/>
</dbReference>
<dbReference type="ComplexPortal" id="CPX-972">
    <property type="entry name" value="BRCC ubiquitin ligase complex"/>
</dbReference>
<dbReference type="CORUM" id="Q08297"/>
<dbReference type="FunCoup" id="Q08297">
    <property type="interactions" value="2527"/>
</dbReference>
<dbReference type="IntAct" id="Q08297">
    <property type="interactions" value="1"/>
</dbReference>
<dbReference type="MINT" id="Q08297"/>
<dbReference type="STRING" id="10090.ENSMUSP00000028795"/>
<dbReference type="ChEMBL" id="CHEMBL2034808"/>
<dbReference type="iPTMnet" id="Q08297"/>
<dbReference type="PhosphoSitePlus" id="Q08297"/>
<dbReference type="PaxDb" id="10090-ENSMUSP00000028795"/>
<dbReference type="ProteomicsDB" id="300305"/>
<dbReference type="Pumba" id="Q08297"/>
<dbReference type="Antibodypedia" id="4162">
    <property type="antibodies" value="984 antibodies from 45 providers"/>
</dbReference>
<dbReference type="DNASU" id="19361"/>
<dbReference type="Ensembl" id="ENSMUST00000028795.10">
    <property type="protein sequence ID" value="ENSMUSP00000028795.4"/>
    <property type="gene ID" value="ENSMUSG00000027323.11"/>
</dbReference>
<dbReference type="GeneID" id="19361"/>
<dbReference type="KEGG" id="mmu:19361"/>
<dbReference type="UCSC" id="uc008ltd.1">
    <property type="organism name" value="mouse"/>
</dbReference>
<dbReference type="AGR" id="MGI:97890"/>
<dbReference type="CTD" id="5888"/>
<dbReference type="MGI" id="MGI:97890">
    <property type="gene designation" value="Rad51"/>
</dbReference>
<dbReference type="VEuPathDB" id="HostDB:ENSMUSG00000027323"/>
<dbReference type="eggNOG" id="KOG1433">
    <property type="taxonomic scope" value="Eukaryota"/>
</dbReference>
<dbReference type="GeneTree" id="ENSGT00940000156157"/>
<dbReference type="HOGENOM" id="CLU_041732_0_2_1"/>
<dbReference type="InParanoid" id="Q08297"/>
<dbReference type="OMA" id="RAYNSNH"/>
<dbReference type="OrthoDB" id="10251254at2759"/>
<dbReference type="PhylomeDB" id="Q08297"/>
<dbReference type="TreeFam" id="TF101218"/>
<dbReference type="Reactome" id="R-MMU-5685938">
    <property type="pathway name" value="HDR through Single Strand Annealing (SSA)"/>
</dbReference>
<dbReference type="Reactome" id="R-MMU-5685942">
    <property type="pathway name" value="HDR through Homologous Recombination (HRR)"/>
</dbReference>
<dbReference type="Reactome" id="R-MMU-5693568">
    <property type="pathway name" value="Resolution of D-loop Structures through Holliday Junction Intermediates"/>
</dbReference>
<dbReference type="Reactome" id="R-MMU-5693579">
    <property type="pathway name" value="Homologous DNA Pairing and Strand Exchange"/>
</dbReference>
<dbReference type="Reactome" id="R-MMU-5693616">
    <property type="pathway name" value="Presynaptic phase of homologous DNA pairing and strand exchange"/>
</dbReference>
<dbReference type="Reactome" id="R-MMU-912446">
    <property type="pathway name" value="Meiotic recombination"/>
</dbReference>
<dbReference type="BioGRID-ORCS" id="19361">
    <property type="hits" value="37 hits in 117 CRISPR screens"/>
</dbReference>
<dbReference type="ChiTaRS" id="Xrcc2">
    <property type="organism name" value="mouse"/>
</dbReference>
<dbReference type="PRO" id="PR:Q08297"/>
<dbReference type="Proteomes" id="UP000000589">
    <property type="component" value="Chromosome 2"/>
</dbReference>
<dbReference type="RNAct" id="Q08297">
    <property type="molecule type" value="protein"/>
</dbReference>
<dbReference type="Bgee" id="ENSMUSG00000027323">
    <property type="expression patterns" value="Expressed in otic placode and 190 other cell types or tissues"/>
</dbReference>
<dbReference type="ExpressionAtlas" id="Q08297">
    <property type="expression patterns" value="baseline and differential"/>
</dbReference>
<dbReference type="GO" id="GO:0005813">
    <property type="term" value="C:centrosome"/>
    <property type="evidence" value="ECO:0007669"/>
    <property type="project" value="UniProtKB-SubCell"/>
</dbReference>
<dbReference type="GO" id="GO:0000785">
    <property type="term" value="C:chromatin"/>
    <property type="evidence" value="ECO:0007669"/>
    <property type="project" value="Ensembl"/>
</dbReference>
<dbReference type="GO" id="GO:0005694">
    <property type="term" value="C:chromosome"/>
    <property type="evidence" value="ECO:0000314"/>
    <property type="project" value="UniProtKB"/>
</dbReference>
<dbReference type="GO" id="GO:0000781">
    <property type="term" value="C:chromosome, telomeric region"/>
    <property type="evidence" value="ECO:0000314"/>
    <property type="project" value="BHF-UCL"/>
</dbReference>
<dbReference type="GO" id="GO:0000793">
    <property type="term" value="C:condensed chromosome"/>
    <property type="evidence" value="ECO:0000314"/>
    <property type="project" value="MGI"/>
</dbReference>
<dbReference type="GO" id="GO:0000794">
    <property type="term" value="C:condensed nuclear chromosome"/>
    <property type="evidence" value="ECO:0000314"/>
    <property type="project" value="MGI"/>
</dbReference>
<dbReference type="GO" id="GO:0005737">
    <property type="term" value="C:cytoplasm"/>
    <property type="evidence" value="ECO:0000314"/>
    <property type="project" value="UniProtKB"/>
</dbReference>
<dbReference type="GO" id="GO:0005829">
    <property type="term" value="C:cytosol"/>
    <property type="evidence" value="ECO:0007669"/>
    <property type="project" value="Ensembl"/>
</dbReference>
<dbReference type="GO" id="GO:0000800">
    <property type="term" value="C:lateral element"/>
    <property type="evidence" value="ECO:0000314"/>
    <property type="project" value="MGI"/>
</dbReference>
<dbReference type="GO" id="GO:0001673">
    <property type="term" value="C:male germ cell nucleus"/>
    <property type="evidence" value="ECO:0000314"/>
    <property type="project" value="MGI"/>
</dbReference>
<dbReference type="GO" id="GO:0005759">
    <property type="term" value="C:mitochondrial matrix"/>
    <property type="evidence" value="ECO:0007669"/>
    <property type="project" value="UniProtKB-SubCell"/>
</dbReference>
<dbReference type="GO" id="GO:0000228">
    <property type="term" value="C:nuclear chromosome"/>
    <property type="evidence" value="ECO:0000250"/>
    <property type="project" value="UniProtKB"/>
</dbReference>
<dbReference type="GO" id="GO:0000152">
    <property type="term" value="C:nuclear ubiquitin ligase complex"/>
    <property type="evidence" value="ECO:0000266"/>
    <property type="project" value="ComplexPortal"/>
</dbReference>
<dbReference type="GO" id="GO:0005730">
    <property type="term" value="C:nucleolus"/>
    <property type="evidence" value="ECO:0007669"/>
    <property type="project" value="Ensembl"/>
</dbReference>
<dbReference type="GO" id="GO:0005654">
    <property type="term" value="C:nucleoplasm"/>
    <property type="evidence" value="ECO:0000304"/>
    <property type="project" value="Reactome"/>
</dbReference>
<dbReference type="GO" id="GO:0005634">
    <property type="term" value="C:nucleus"/>
    <property type="evidence" value="ECO:0000314"/>
    <property type="project" value="UniProtKB"/>
</dbReference>
<dbReference type="GO" id="GO:0048471">
    <property type="term" value="C:perinuclear region of cytoplasm"/>
    <property type="evidence" value="ECO:0000250"/>
    <property type="project" value="UniProtKB"/>
</dbReference>
<dbReference type="GO" id="GO:0016605">
    <property type="term" value="C:PML body"/>
    <property type="evidence" value="ECO:0007669"/>
    <property type="project" value="Ensembl"/>
</dbReference>
<dbReference type="GO" id="GO:0099182">
    <property type="term" value="C:presynaptic intermediate filament cytoskeleton"/>
    <property type="evidence" value="ECO:0007669"/>
    <property type="project" value="Ensembl"/>
</dbReference>
<dbReference type="GO" id="GO:0035861">
    <property type="term" value="C:site of double-strand break"/>
    <property type="evidence" value="ECO:0000314"/>
    <property type="project" value="UniProt"/>
</dbReference>
<dbReference type="GO" id="GO:0000795">
    <property type="term" value="C:synaptonemal complex"/>
    <property type="evidence" value="ECO:0000304"/>
    <property type="project" value="UniProtKB"/>
</dbReference>
<dbReference type="GO" id="GO:0005524">
    <property type="term" value="F:ATP binding"/>
    <property type="evidence" value="ECO:0000266"/>
    <property type="project" value="MGI"/>
</dbReference>
<dbReference type="GO" id="GO:0016887">
    <property type="term" value="F:ATP hydrolysis activity"/>
    <property type="evidence" value="ECO:0007669"/>
    <property type="project" value="InterPro"/>
</dbReference>
<dbReference type="GO" id="GO:0140664">
    <property type="term" value="F:ATP-dependent DNA damage sensor activity"/>
    <property type="evidence" value="ECO:0007669"/>
    <property type="project" value="InterPro"/>
</dbReference>
<dbReference type="GO" id="GO:0003682">
    <property type="term" value="F:chromatin binding"/>
    <property type="evidence" value="ECO:0000314"/>
    <property type="project" value="MGI"/>
</dbReference>
<dbReference type="GO" id="GO:0070182">
    <property type="term" value="F:DNA polymerase binding"/>
    <property type="evidence" value="ECO:0007669"/>
    <property type="project" value="Ensembl"/>
</dbReference>
<dbReference type="GO" id="GO:0000150">
    <property type="term" value="F:DNA strand exchange activity"/>
    <property type="evidence" value="ECO:0000314"/>
    <property type="project" value="UniProt"/>
</dbReference>
<dbReference type="GO" id="GO:0003690">
    <property type="term" value="F:double-stranded DNA binding"/>
    <property type="evidence" value="ECO:0000250"/>
    <property type="project" value="UniProtKB"/>
</dbReference>
<dbReference type="GO" id="GO:0042802">
    <property type="term" value="F:identical protein binding"/>
    <property type="evidence" value="ECO:0007669"/>
    <property type="project" value="Ensembl"/>
</dbReference>
<dbReference type="GO" id="GO:0003697">
    <property type="term" value="F:single-stranded DNA binding"/>
    <property type="evidence" value="ECO:0000314"/>
    <property type="project" value="MGI"/>
</dbReference>
<dbReference type="GO" id="GO:0017116">
    <property type="term" value="F:single-stranded DNA helicase activity"/>
    <property type="evidence" value="ECO:0000250"/>
    <property type="project" value="UniProtKB"/>
</dbReference>
<dbReference type="GO" id="GO:0071312">
    <property type="term" value="P:cellular response to alkaloid"/>
    <property type="evidence" value="ECO:0000315"/>
    <property type="project" value="MGI"/>
</dbReference>
<dbReference type="GO" id="GO:0072757">
    <property type="term" value="P:cellular response to camptothecin"/>
    <property type="evidence" value="ECO:0000250"/>
    <property type="project" value="UniProtKB"/>
</dbReference>
<dbReference type="GO" id="GO:0072719">
    <property type="term" value="P:cellular response to cisplatin"/>
    <property type="evidence" value="ECO:0007669"/>
    <property type="project" value="Ensembl"/>
</dbReference>
<dbReference type="GO" id="GO:0071480">
    <property type="term" value="P:cellular response to gamma radiation"/>
    <property type="evidence" value="ECO:0007669"/>
    <property type="project" value="Ensembl"/>
</dbReference>
<dbReference type="GO" id="GO:0072711">
    <property type="term" value="P:cellular response to hydroxyurea"/>
    <property type="evidence" value="ECO:0000315"/>
    <property type="project" value="MGI"/>
</dbReference>
<dbReference type="GO" id="GO:0071479">
    <property type="term" value="P:cellular response to ionizing radiation"/>
    <property type="evidence" value="ECO:0000250"/>
    <property type="project" value="UniProtKB"/>
</dbReference>
<dbReference type="GO" id="GO:0070192">
    <property type="term" value="P:chromosome organization involved in meiotic cell cycle"/>
    <property type="evidence" value="ECO:0000315"/>
    <property type="project" value="MGI"/>
</dbReference>
<dbReference type="GO" id="GO:0006974">
    <property type="term" value="P:DNA damage response"/>
    <property type="evidence" value="ECO:0000250"/>
    <property type="project" value="UniProtKB"/>
</dbReference>
<dbReference type="GO" id="GO:0000730">
    <property type="term" value="P:DNA recombinase assembly"/>
    <property type="evidence" value="ECO:0000250"/>
    <property type="project" value="UniProtKB"/>
</dbReference>
<dbReference type="GO" id="GO:0006281">
    <property type="term" value="P:DNA repair"/>
    <property type="evidence" value="ECO:0000304"/>
    <property type="project" value="UniProtKB"/>
</dbReference>
<dbReference type="GO" id="GO:1990918">
    <property type="term" value="P:double-strand break repair involved in meiotic recombination"/>
    <property type="evidence" value="ECO:0000314"/>
    <property type="project" value="UniProt"/>
</dbReference>
<dbReference type="GO" id="GO:0000724">
    <property type="term" value="P:double-strand break repair via homologous recombination"/>
    <property type="evidence" value="ECO:0000314"/>
    <property type="project" value="MGI"/>
</dbReference>
<dbReference type="GO" id="GO:0036297">
    <property type="term" value="P:interstrand cross-link repair"/>
    <property type="evidence" value="ECO:0000250"/>
    <property type="project" value="UniProtKB"/>
</dbReference>
<dbReference type="GO" id="GO:0051321">
    <property type="term" value="P:meiotic cell cycle"/>
    <property type="evidence" value="ECO:0000314"/>
    <property type="project" value="MGI"/>
</dbReference>
<dbReference type="GO" id="GO:1990426">
    <property type="term" value="P:mitotic recombination-dependent replication fork processing"/>
    <property type="evidence" value="ECO:0007669"/>
    <property type="project" value="InterPro"/>
</dbReference>
<dbReference type="GO" id="GO:0007131">
    <property type="term" value="P:reciprocal meiotic recombination"/>
    <property type="evidence" value="ECO:0000314"/>
    <property type="project" value="UniProt"/>
</dbReference>
<dbReference type="GO" id="GO:2000001">
    <property type="term" value="P:regulation of DNA damage checkpoint"/>
    <property type="evidence" value="ECO:0000303"/>
    <property type="project" value="ComplexPortal"/>
</dbReference>
<dbReference type="GO" id="GO:0010569">
    <property type="term" value="P:regulation of double-strand break repair via homologous recombination"/>
    <property type="evidence" value="ECO:0000250"/>
    <property type="project" value="UniProtKB"/>
</dbReference>
<dbReference type="GO" id="GO:0031297">
    <property type="term" value="P:replication fork processing"/>
    <property type="evidence" value="ECO:0000315"/>
    <property type="project" value="MGI"/>
</dbReference>
<dbReference type="GO" id="GO:1990414">
    <property type="term" value="P:replication-born double-strand break repair via sister chromatid exchange"/>
    <property type="evidence" value="ECO:0000315"/>
    <property type="project" value="MGI"/>
</dbReference>
<dbReference type="GO" id="GO:1904631">
    <property type="term" value="P:response to glucoside"/>
    <property type="evidence" value="ECO:0007669"/>
    <property type="project" value="Ensembl"/>
</dbReference>
<dbReference type="GO" id="GO:0009636">
    <property type="term" value="P:response to toxic substance"/>
    <property type="evidence" value="ECO:0007669"/>
    <property type="project" value="Ensembl"/>
</dbReference>
<dbReference type="GO" id="GO:0010165">
    <property type="term" value="P:response to X-ray"/>
    <property type="evidence" value="ECO:0007669"/>
    <property type="project" value="Ensembl"/>
</dbReference>
<dbReference type="GO" id="GO:0009410">
    <property type="term" value="P:response to xenobiotic stimulus"/>
    <property type="evidence" value="ECO:0007669"/>
    <property type="project" value="Ensembl"/>
</dbReference>
<dbReference type="GO" id="GO:0000722">
    <property type="term" value="P:telomere maintenance via recombination"/>
    <property type="evidence" value="ECO:0000316"/>
    <property type="project" value="BHF-UCL"/>
</dbReference>
<dbReference type="GO" id="GO:0010833">
    <property type="term" value="P:telomere maintenance via telomere lengthening"/>
    <property type="evidence" value="ECO:0000316"/>
    <property type="project" value="BHF-UCL"/>
</dbReference>
<dbReference type="GO" id="GO:0032200">
    <property type="term" value="P:telomere organization"/>
    <property type="evidence" value="ECO:0000315"/>
    <property type="project" value="MGI"/>
</dbReference>
<dbReference type="CDD" id="cd19513">
    <property type="entry name" value="Rad51"/>
    <property type="match status" value="1"/>
</dbReference>
<dbReference type="FunFam" id="1.10.150.20:FF:000029">
    <property type="entry name" value="DNA repair protein RAD51 homolog"/>
    <property type="match status" value="1"/>
</dbReference>
<dbReference type="FunFam" id="3.40.50.300:FF:000092">
    <property type="entry name" value="DNA repair protein Rad51 homolog"/>
    <property type="match status" value="1"/>
</dbReference>
<dbReference type="Gene3D" id="1.10.150.20">
    <property type="entry name" value="5' to 3' exonuclease, C-terminal subdomain"/>
    <property type="match status" value="1"/>
</dbReference>
<dbReference type="Gene3D" id="3.40.50.300">
    <property type="entry name" value="P-loop containing nucleotide triphosphate hydrolases"/>
    <property type="match status" value="1"/>
</dbReference>
<dbReference type="InterPro" id="IPR003593">
    <property type="entry name" value="AAA+_ATPase"/>
</dbReference>
<dbReference type="InterPro" id="IPR011941">
    <property type="entry name" value="DNA_recomb/repair_Rad51"/>
</dbReference>
<dbReference type="InterPro" id="IPR013632">
    <property type="entry name" value="DNA_recomb/repair_Rad51_C"/>
</dbReference>
<dbReference type="InterPro" id="IPR016467">
    <property type="entry name" value="DNA_recomb/repair_RecA-like"/>
</dbReference>
<dbReference type="InterPro" id="IPR010995">
    <property type="entry name" value="DNA_repair_Rad51/TF_NusA_a-hlx"/>
</dbReference>
<dbReference type="InterPro" id="IPR027417">
    <property type="entry name" value="P-loop_NTPase"/>
</dbReference>
<dbReference type="InterPro" id="IPR020588">
    <property type="entry name" value="RecA_ATP-bd"/>
</dbReference>
<dbReference type="InterPro" id="IPR020587">
    <property type="entry name" value="RecA_monomer-monomer_interface"/>
</dbReference>
<dbReference type="NCBIfam" id="NF003301">
    <property type="entry name" value="PRK04301.1"/>
    <property type="match status" value="1"/>
</dbReference>
<dbReference type="NCBIfam" id="TIGR02239">
    <property type="entry name" value="recomb_RAD51"/>
    <property type="match status" value="1"/>
</dbReference>
<dbReference type="PANTHER" id="PTHR22942:SF39">
    <property type="entry name" value="DNA REPAIR PROTEIN RAD51 HOMOLOG 1"/>
    <property type="match status" value="1"/>
</dbReference>
<dbReference type="PANTHER" id="PTHR22942">
    <property type="entry name" value="RECA/RAD51/RADA DNA STRAND-PAIRING FAMILY MEMBER"/>
    <property type="match status" value="1"/>
</dbReference>
<dbReference type="Pfam" id="PF14520">
    <property type="entry name" value="HHH_5"/>
    <property type="match status" value="1"/>
</dbReference>
<dbReference type="Pfam" id="PF08423">
    <property type="entry name" value="Rad51"/>
    <property type="match status" value="1"/>
</dbReference>
<dbReference type="PIRSF" id="PIRSF005856">
    <property type="entry name" value="Rad51"/>
    <property type="match status" value="1"/>
</dbReference>
<dbReference type="SMART" id="SM00382">
    <property type="entry name" value="AAA"/>
    <property type="match status" value="1"/>
</dbReference>
<dbReference type="SUPFAM" id="SSF52540">
    <property type="entry name" value="P-loop containing nucleoside triphosphate hydrolases"/>
    <property type="match status" value="1"/>
</dbReference>
<dbReference type="SUPFAM" id="SSF47794">
    <property type="entry name" value="Rad51 N-terminal domain-like"/>
    <property type="match status" value="1"/>
</dbReference>
<dbReference type="PROSITE" id="PS50162">
    <property type="entry name" value="RECA_2"/>
    <property type="match status" value="1"/>
</dbReference>
<dbReference type="PROSITE" id="PS50163">
    <property type="entry name" value="RECA_3"/>
    <property type="match status" value="1"/>
</dbReference>
<gene>
    <name evidence="18" type="primary">Rad51</name>
    <name type="synonym">Rad51a</name>
    <name type="synonym">Reca</name>
</gene>
<feature type="initiator methionine" description="Removed" evidence="1">
    <location>
        <position position="1"/>
    </location>
</feature>
<feature type="chain" id="PRO_0000122933" description="DNA repair protein RAD51 homolog 1">
    <location>
        <begin position="2"/>
        <end position="339"/>
    </location>
</feature>
<feature type="domain" description="HhH">
    <location>
        <begin position="48"/>
        <end position="77"/>
    </location>
</feature>
<feature type="region of interest" description="Disordered" evidence="3">
    <location>
        <begin position="1"/>
        <end position="22"/>
    </location>
</feature>
<feature type="region of interest" description="Interaction with PALB2" evidence="1">
    <location>
        <begin position="184"/>
        <end position="257"/>
    </location>
</feature>
<feature type="short sequence motif" description="Nuclear export signal; masked by the interaction with BRCA2" evidence="1">
    <location>
        <begin position="245"/>
        <end position="260"/>
    </location>
</feature>
<feature type="binding site" evidence="2">
    <location>
        <begin position="127"/>
        <end position="134"/>
    </location>
    <ligand>
        <name>ATP</name>
        <dbReference type="ChEBI" id="CHEBI:30616"/>
    </ligand>
</feature>
<feature type="modified residue" description="N-acetylalanine" evidence="1">
    <location>
        <position position="2"/>
    </location>
</feature>
<feature type="modified residue" description="Phosphothreonine" evidence="1">
    <location>
        <position position="13"/>
    </location>
</feature>
<feature type="modified residue" description="Phosphoserine" evidence="1">
    <location>
        <position position="14"/>
    </location>
</feature>
<feature type="modified residue" description="Phosphotyrosine; by ABL1" evidence="1">
    <location>
        <position position="54"/>
    </location>
</feature>
<feature type="modified residue" description="Phosphothreonine; by CHEK1" evidence="1">
    <location>
        <position position="309"/>
    </location>
</feature>
<feature type="cross-link" description="Glycyl lysine isopeptide (Lys-Gly) (interchain with G-Cter in ubiquitin)" evidence="1">
    <location>
        <position position="58"/>
    </location>
</feature>
<feature type="cross-link" description="Glycyl lysine isopeptide (Lys-Gly) (interchain with G-Cter in ubiquitin)" evidence="1">
    <location>
        <position position="64"/>
    </location>
</feature>
<comment type="function">
    <text evidence="1 5">Plays an important role in homologous strand exchange, a key step in DNA repair through homologous recombination (HR) (PubMed:15834424). Binds to single-stranded DNA in an ATP-dependent manner to form nucleoprotein filaments which are essential for the homology search and strand exchange. Catalyzes the recognition of homology and strand exchange between homologous DNA partners to form a joint molecule between a processed DNA break and the repair template. Recruited to resolve stalled replication forks during replication stress. Part of a PALB2-scaffolded HR complex containing BRCA2 and RAD51C and which is thought to play a role in DNA repair by HR. Plays a role in regulating mitochondrial DNA copy number under conditions of oxidative stress in the presence of RAD51C and XRCC3. Also involved in interstrand cross-link repair (By similarity).</text>
</comment>
<comment type="subunit">
    <text evidence="1 5 6 8 11 13">Forms linear homooligomers, giving rise to a RAD51 nucleoprotein filament, which is essential for strand-pairing reactions during DNA recombination. Interacts with BRCA1 and either directly or indirectly with p53. Interacts with XRCC3, RAD54L and RAD54B. Interacts with the BCDX2 subcomplex RAD51C:RAD51B. Component of the homologous recombination repair (HR) complex composed of ERCC5/XPG, BRCA2, PALB2, DSS1 and RAD51 (By similarity). Interacts directly with PALB2 which may serve as a scaffold for a HR complex containing PALB2, BRCA2, RAD51C, RAD51 and XRCC3. Interacts with RAD51AP1 and RAD51AP2. Interacts with CHEK1, and this may require prior phosphorylation of CHEK1 (By similarity). Interacts with the MND1-PSMC3IP heterodimer (PubMed:15834424). Found in a complex, at least composed of BLM, RAD51 and SPIDR; the complex formation is mediated by SPIDR. Interacts with SPIDR; the interaction is direct and recruits RAD51 to DNA damage sites. Interacts with FIGNL1 (via N-terminal one-half region); the interaction is direct. Interacts with RAD51AP1 (via C-terminal region); the interaction is direct (By similarity). Interacts with NABP2, RPA1, PALB2 and RAD51. Interacts with SWI5/C9orf119, and at lower level with SFR1/MEIR5 (PubMed:20976249). Interacts with hyperphosphorylated RPA2; this interaction is necessary for efficient recruitment to chromatin in response to DNA damage. Interacts with SWSAP1; involved in homologous recombination repair. Interacts with PARPBP, BRCA2 and RECQL5; these interactions interfere with the formation of the RAD51-DNA homologous recombination structure. Interacts with POLQ; POLQ acts as an inhibitor of homology-recombination repair (HR) pathway by limiting RAD51 accumulation at resected ends. Interacts with POLN (By similarity). Interacts with FBH1 (PubMed:24108124). Interacts with RFWD3 (By similarity). Interacts with the MCM8-MCM9 complex; the interaction recruits RAD51 to DNA damage sites (By similarity). Component of a multiprotein complex with MEIOB and SPATA22. Interacts with the complex BRME1:HSF2BP:BRCA2 (PubMed:30760716, PubMed:32345962). Interacts with HELQ; stimulating HELQ DNA helicase activity and ability to unwing DNA (By similarity). Interacts with MMS22L; the interaction is direct and promotes recruitment of RAD51 to sites of DNA damage (By similarity). Interacts with the ATAD5 RFC-like complex (By similarity). Within the ATAD5 RFC-like complex, interacts with ATAD5 (via N-terminus); the interaction is direct and enhanced under replication stress (By similarity). Interacts with WDR48; the interaction is enhanced under replication stress (By similarity). Interacts with DNA helicase ZGRF1; the interaction promotes RAD51 strand exchange activity (By similarity). Interacts (when phosphorylated) with TOPBP1; interaction takes place following phosphorylation by CK2 and PLK1 and promotes recruitment to DNA damage sites (By similarity). Interacts with GRB2; this interaction inhibits RAD51 ATPase activity to stabilize RAD51 on stalled replication forks (By similarity).</text>
</comment>
<comment type="subcellular location">
    <subcellularLocation>
        <location evidence="4">Nucleus</location>
    </subcellularLocation>
    <subcellularLocation>
        <location evidence="4">Cytoplasm</location>
    </subcellularLocation>
    <subcellularLocation>
        <location evidence="1">Cytoplasm</location>
        <location evidence="1">Perinuclear region</location>
    </subcellularLocation>
    <subcellularLocation>
        <location evidence="1">Mitochondrion matrix</location>
    </subcellularLocation>
    <subcellularLocation>
        <location evidence="9 10 11 12 14">Chromosome</location>
    </subcellularLocation>
    <subcellularLocation>
        <location evidence="1">Cytoplasm</location>
        <location evidence="1">Cytoskeleton</location>
        <location evidence="1">Microtubule organizing center</location>
        <location evidence="1">Centrosome</location>
    </subcellularLocation>
    <text evidence="1">Colocalizes with RAD51AP1 and RPA2 to multiple nuclear foci upon induction of DNA damage. DNA damage induces an increase in nuclear levels. Together with FIGNL1, redistributed in discrete nuclear DNA damage-induced foci after ionizing radiation (IR) or camptothecin (CPT) treatment. Accumulated at sites of DNA damage in a SPIDR-dependent manner. Recruited at sites of DNA damage in a MCM9-MCM8-dependent manner. Recruited at sites of DNA damage following interaction with TOPBP1 in S-phase. Colocalizes with ERCC5/XPG to nuclear foci in S phase. Recruited to stalled replication forks during replication stress by the TONSL-MMS22L complex, as well as ATAD5 and WDR48 in an ATR-dependent manner.</text>
</comment>
<comment type="tissue specificity">
    <text evidence="7 15 16">Expressed in the testes (at protein level) (PubMed:35547804, PubMed:8341671). Expressed in the brain (at protein level) (PubMed:22305526). Expressed in the thymus, spleen, ovary and small intestine (PubMed:8341671).</text>
</comment>
<comment type="developmental stage">
    <text evidence="7">Expression in the brain is strongest at day 12 dpc, particularly in the cortical ventricular zone. In the cortex of newborn mice (P0), RAD51 is mainly present in the subplate and, in lesser amounts, in layer V. It is detected in a subpopulation of corticospinal axons at the pyramidal decussation in 2-day-old (P2) mice.</text>
</comment>
<comment type="PTM">
    <text evidence="1">Ubiquitinated by the SCF(FBH1) E3 ubiquitin ligase complex, regulating RAD51 subcellular location and preventing its association with DNA. Ubiquitinated by RFWD3 in response to DNA damage: ubiquitination leads to degradation by the proteasome, promoting homologous recombination.</text>
</comment>
<comment type="PTM">
    <text evidence="1">Phosphorylation of Thr-309 by CHEK1 may enhance association with chromatin at sites of DNA damage and promote DNA repair by homologous recombination. Phosphorylated at Ser-14 by PLK1, triggering phosphorylation at Thr-13 by CK2, thereby promoting interaction with TOPBP1 and recruitment to DNA damage sites during S-phase. Phosphorylation by ABL1 inhibits function.</text>
</comment>
<comment type="miscellaneous">
    <text>The nucleus of a mouse embryonic stem (ES) cells contains on average 4.7 x 10(5) molecules.</text>
</comment>
<comment type="similarity">
    <text evidence="17">Belongs to the RecA family. RAD51 subfamily.</text>
</comment>
<name>RAD51_MOUSE</name>
<reference key="1">
    <citation type="journal article" date="1993" name="Nat. Genet.">
        <title>Cloning of human, mouse and fission yeast recombination genes homologous to RAD51 and recA.</title>
        <authorList>
            <person name="Shinohara A."/>
            <person name="Ogawa H."/>
            <person name="Matsuda Y."/>
            <person name="Ushio N."/>
            <person name="Ikeo K."/>
            <person name="Ogawa T."/>
        </authorList>
    </citation>
    <scope>NUCLEOTIDE SEQUENCE [MRNA]</scope>
</reference>
<reference key="2">
    <citation type="journal article" date="1993" name="Proc. Natl. Acad. Sci. U.S.A.">
        <title>A mouse homolog of the Escherichia coli recA and Saccharomyces cerevisiae RAD51 genes.</title>
        <authorList>
            <person name="Morita T."/>
            <person name="Yoshimura Y."/>
            <person name="Yamamoto A."/>
            <person name="Murata K."/>
            <person name="Mori M."/>
            <person name="Yamamoto H."/>
            <person name="Matsushiro A."/>
        </authorList>
    </citation>
    <scope>NUCLEOTIDE SEQUENCE [MRNA]</scope>
    <scope>TISSUE SPECIFICITY</scope>
    <source>
        <tissue>Testis</tissue>
    </source>
</reference>
<reference key="3">
    <citation type="journal article" date="2005" name="Science">
        <title>The transcriptional landscape of the mammalian genome.</title>
        <authorList>
            <person name="Carninci P."/>
            <person name="Kasukawa T."/>
            <person name="Katayama S."/>
            <person name="Gough J."/>
            <person name="Frith M.C."/>
            <person name="Maeda N."/>
            <person name="Oyama R."/>
            <person name="Ravasi T."/>
            <person name="Lenhard B."/>
            <person name="Wells C."/>
            <person name="Kodzius R."/>
            <person name="Shimokawa K."/>
            <person name="Bajic V.B."/>
            <person name="Brenner S.E."/>
            <person name="Batalov S."/>
            <person name="Forrest A.R."/>
            <person name="Zavolan M."/>
            <person name="Davis M.J."/>
            <person name="Wilming L.G."/>
            <person name="Aidinis V."/>
            <person name="Allen J.E."/>
            <person name="Ambesi-Impiombato A."/>
            <person name="Apweiler R."/>
            <person name="Aturaliya R.N."/>
            <person name="Bailey T.L."/>
            <person name="Bansal M."/>
            <person name="Baxter L."/>
            <person name="Beisel K.W."/>
            <person name="Bersano T."/>
            <person name="Bono H."/>
            <person name="Chalk A.M."/>
            <person name="Chiu K.P."/>
            <person name="Choudhary V."/>
            <person name="Christoffels A."/>
            <person name="Clutterbuck D.R."/>
            <person name="Crowe M.L."/>
            <person name="Dalla E."/>
            <person name="Dalrymple B.P."/>
            <person name="de Bono B."/>
            <person name="Della Gatta G."/>
            <person name="di Bernardo D."/>
            <person name="Down T."/>
            <person name="Engstrom P."/>
            <person name="Fagiolini M."/>
            <person name="Faulkner G."/>
            <person name="Fletcher C.F."/>
            <person name="Fukushima T."/>
            <person name="Furuno M."/>
            <person name="Futaki S."/>
            <person name="Gariboldi M."/>
            <person name="Georgii-Hemming P."/>
            <person name="Gingeras T.R."/>
            <person name="Gojobori T."/>
            <person name="Green R.E."/>
            <person name="Gustincich S."/>
            <person name="Harbers M."/>
            <person name="Hayashi Y."/>
            <person name="Hensch T.K."/>
            <person name="Hirokawa N."/>
            <person name="Hill D."/>
            <person name="Huminiecki L."/>
            <person name="Iacono M."/>
            <person name="Ikeo K."/>
            <person name="Iwama A."/>
            <person name="Ishikawa T."/>
            <person name="Jakt M."/>
            <person name="Kanapin A."/>
            <person name="Katoh M."/>
            <person name="Kawasawa Y."/>
            <person name="Kelso J."/>
            <person name="Kitamura H."/>
            <person name="Kitano H."/>
            <person name="Kollias G."/>
            <person name="Krishnan S.P."/>
            <person name="Kruger A."/>
            <person name="Kummerfeld S.K."/>
            <person name="Kurochkin I.V."/>
            <person name="Lareau L.F."/>
            <person name="Lazarevic D."/>
            <person name="Lipovich L."/>
            <person name="Liu J."/>
            <person name="Liuni S."/>
            <person name="McWilliam S."/>
            <person name="Madan Babu M."/>
            <person name="Madera M."/>
            <person name="Marchionni L."/>
            <person name="Matsuda H."/>
            <person name="Matsuzawa S."/>
            <person name="Miki H."/>
            <person name="Mignone F."/>
            <person name="Miyake S."/>
            <person name="Morris K."/>
            <person name="Mottagui-Tabar S."/>
            <person name="Mulder N."/>
            <person name="Nakano N."/>
            <person name="Nakauchi H."/>
            <person name="Ng P."/>
            <person name="Nilsson R."/>
            <person name="Nishiguchi S."/>
            <person name="Nishikawa S."/>
            <person name="Nori F."/>
            <person name="Ohara O."/>
            <person name="Okazaki Y."/>
            <person name="Orlando V."/>
            <person name="Pang K.C."/>
            <person name="Pavan W.J."/>
            <person name="Pavesi G."/>
            <person name="Pesole G."/>
            <person name="Petrovsky N."/>
            <person name="Piazza S."/>
            <person name="Reed J."/>
            <person name="Reid J.F."/>
            <person name="Ring B.Z."/>
            <person name="Ringwald M."/>
            <person name="Rost B."/>
            <person name="Ruan Y."/>
            <person name="Salzberg S.L."/>
            <person name="Sandelin A."/>
            <person name="Schneider C."/>
            <person name="Schoenbach C."/>
            <person name="Sekiguchi K."/>
            <person name="Semple C.A."/>
            <person name="Seno S."/>
            <person name="Sessa L."/>
            <person name="Sheng Y."/>
            <person name="Shibata Y."/>
            <person name="Shimada H."/>
            <person name="Shimada K."/>
            <person name="Silva D."/>
            <person name="Sinclair B."/>
            <person name="Sperling S."/>
            <person name="Stupka E."/>
            <person name="Sugiura K."/>
            <person name="Sultana R."/>
            <person name="Takenaka Y."/>
            <person name="Taki K."/>
            <person name="Tammoja K."/>
            <person name="Tan S.L."/>
            <person name="Tang S."/>
            <person name="Taylor M.S."/>
            <person name="Tegner J."/>
            <person name="Teichmann S.A."/>
            <person name="Ueda H.R."/>
            <person name="van Nimwegen E."/>
            <person name="Verardo R."/>
            <person name="Wei C.L."/>
            <person name="Yagi K."/>
            <person name="Yamanishi H."/>
            <person name="Zabarovsky E."/>
            <person name="Zhu S."/>
            <person name="Zimmer A."/>
            <person name="Hide W."/>
            <person name="Bult C."/>
            <person name="Grimmond S.M."/>
            <person name="Teasdale R.D."/>
            <person name="Liu E.T."/>
            <person name="Brusic V."/>
            <person name="Quackenbush J."/>
            <person name="Wahlestedt C."/>
            <person name="Mattick J.S."/>
            <person name="Hume D.A."/>
            <person name="Kai C."/>
            <person name="Sasaki D."/>
            <person name="Tomaru Y."/>
            <person name="Fukuda S."/>
            <person name="Kanamori-Katayama M."/>
            <person name="Suzuki M."/>
            <person name="Aoki J."/>
            <person name="Arakawa T."/>
            <person name="Iida J."/>
            <person name="Imamura K."/>
            <person name="Itoh M."/>
            <person name="Kato T."/>
            <person name="Kawaji H."/>
            <person name="Kawagashira N."/>
            <person name="Kawashima T."/>
            <person name="Kojima M."/>
            <person name="Kondo S."/>
            <person name="Konno H."/>
            <person name="Nakano K."/>
            <person name="Ninomiya N."/>
            <person name="Nishio T."/>
            <person name="Okada M."/>
            <person name="Plessy C."/>
            <person name="Shibata K."/>
            <person name="Shiraki T."/>
            <person name="Suzuki S."/>
            <person name="Tagami M."/>
            <person name="Waki K."/>
            <person name="Watahiki A."/>
            <person name="Okamura-Oho Y."/>
            <person name="Suzuki H."/>
            <person name="Kawai J."/>
            <person name="Hayashizaki Y."/>
        </authorList>
    </citation>
    <scope>NUCLEOTIDE SEQUENCE [LARGE SCALE MRNA]</scope>
    <source>
        <strain>C57BL/6J</strain>
        <tissue>Bone marrow</tissue>
    </source>
</reference>
<reference key="4">
    <citation type="journal article" date="2004" name="Genome Res.">
        <title>The status, quality, and expansion of the NIH full-length cDNA project: the Mammalian Gene Collection (MGC).</title>
        <authorList>
            <consortium name="The MGC Project Team"/>
        </authorList>
    </citation>
    <scope>NUCLEOTIDE SEQUENCE [LARGE SCALE MRNA]</scope>
    <source>
        <strain>FVB/N</strain>
        <tissue>Mammary gland</tissue>
    </source>
</reference>
<reference key="5">
    <citation type="journal article" date="2002" name="DNA Repair">
        <title>Analysis of mouse Rad54 expression and its implications for homologous recombination.</title>
        <authorList>
            <person name="Essers J."/>
            <person name="Hendriks R.W."/>
            <person name="Wesoly J."/>
            <person name="Beerens C.E.M.T."/>
            <person name="Smit B."/>
            <person name="Hoeijmakers J.H.J."/>
            <person name="Wyman C."/>
            <person name="Dronkert M.L.G."/>
            <person name="Kanaar R."/>
        </authorList>
    </citation>
    <scope>SUBCELLULAR LOCATION</scope>
</reference>
<reference key="6">
    <citation type="journal article" date="2005" name="Nat. Struct. Mol. Biol.">
        <title>The Hop2 and Mnd1 proteins act in concert with Rad51 and Dmc1 in meiotic recombination.</title>
        <authorList>
            <person name="Petukhova G.V."/>
            <person name="Pezza R.J."/>
            <person name="Vanevski F."/>
            <person name="Ploquin M."/>
            <person name="Masson J.-Y."/>
            <person name="Camerini-Otero R.D."/>
        </authorList>
    </citation>
    <scope>FUNCTION</scope>
    <scope>INTERACTION WITH MND1-PSMC3IP HETERODIMER</scope>
</reference>
<reference key="7">
    <citation type="journal article" date="2010" name="Cell">
        <title>A tissue-specific atlas of mouse protein phosphorylation and expression.</title>
        <authorList>
            <person name="Huttlin E.L."/>
            <person name="Jedrychowski M.P."/>
            <person name="Elias J.E."/>
            <person name="Goswami T."/>
            <person name="Rad R."/>
            <person name="Beausoleil S.A."/>
            <person name="Villen J."/>
            <person name="Haas W."/>
            <person name="Sowa M.E."/>
            <person name="Gygi S.P."/>
        </authorList>
    </citation>
    <scope>IDENTIFICATION BY MASS SPECTROMETRY [LARGE SCALE ANALYSIS]</scope>
    <source>
        <tissue>Spleen</tissue>
        <tissue>Testis</tissue>
    </source>
</reference>
<reference key="8">
    <citation type="journal article" date="2010" name="PLoS Genet.">
        <title>Role for the mammalian Swi5-Sfr1 complex in DNA strand break repair through homologous recombination.</title>
        <authorList>
            <person name="Akamatsu Y."/>
            <person name="Jasin M."/>
        </authorList>
    </citation>
    <scope>INTERACTION WITH SWI5</scope>
</reference>
<reference key="9">
    <citation type="journal article" date="2012" name="Am. J. Hum. Genet.">
        <title>RAD51 haploinsufficiency causes congenital mirror movements in humans.</title>
        <authorList>
            <person name="Depienne C."/>
            <person name="Bouteiller D."/>
            <person name="Meneret A."/>
            <person name="Billot S."/>
            <person name="Groppa S."/>
            <person name="Klebe S."/>
            <person name="Charbonnier-Beaupel F."/>
            <person name="Corvol J.C."/>
            <person name="Saraiva J.P."/>
            <person name="Brueggemann N."/>
            <person name="Bhatia K."/>
            <person name="Cincotta M."/>
            <person name="Brochard V."/>
            <person name="Flamand-Roze C."/>
            <person name="Carpentier W."/>
            <person name="Meunier S."/>
            <person name="Marie Y."/>
            <person name="Gaussen M."/>
            <person name="Stevanin G."/>
            <person name="Wehrle R."/>
            <person name="Vidailhet M."/>
            <person name="Klein C."/>
            <person name="Dusart I."/>
            <person name="Brice A."/>
            <person name="Roze E."/>
        </authorList>
    </citation>
    <scope>TISSUE SPECIFICITY</scope>
    <scope>DEVELOPMENTAL STAGE</scope>
</reference>
<reference key="10">
    <citation type="journal article" date="2013" name="J. Biol. Chem.">
        <title>FBH1 helicase disrupts RAD51 filaments in vitro and modulates homologous recombination in mammalian cells.</title>
        <authorList>
            <person name="Simandlova J."/>
            <person name="Zagelbaum J."/>
            <person name="Payne M.J."/>
            <person name="Chu W.K."/>
            <person name="Shevelev I."/>
            <person name="Hanada K."/>
            <person name="Chatterjee S."/>
            <person name="Reid D.A."/>
            <person name="Liu Y."/>
            <person name="Janscak P."/>
            <person name="Rothenberg E."/>
            <person name="Hickson I.D."/>
        </authorList>
    </citation>
    <scope>INTERACTION WITH FBH1</scope>
</reference>
<reference key="11">
    <citation type="journal article" date="2019" name="Nat. Commun.">
        <title>A meiosis-specific BRCA2 binding protein recruits recombinases to DNA double-strand breaks to ensure homologous recombination.</title>
        <authorList>
            <person name="Zhang J."/>
            <person name="Fujiwara Y."/>
            <person name="Yamamoto S."/>
            <person name="Shibuya H."/>
        </authorList>
    </citation>
    <scope>SUBCELLULAR LOCATION</scope>
    <scope>INTERACTION WITH BRCA2</scope>
</reference>
<reference key="12">
    <citation type="journal article" date="2020" name="Nat. Commun.">
        <title>The BRCA2-MEILB2-BRME1 complex governs meiotic recombination and impairs the mitotic BRCA2-RAD51 function in cancer cells.</title>
        <authorList>
            <person name="Zhang J."/>
            <person name="Gurusaran M."/>
            <person name="Fujiwara Y."/>
            <person name="Zhang K."/>
            <person name="Echbarthi M."/>
            <person name="Vorontsov E."/>
            <person name="Guo R."/>
            <person name="Pendlebury D.F."/>
            <person name="Alam I."/>
            <person name="Livera G."/>
            <person name="Emmanuelle M."/>
            <person name="Wang P.J."/>
            <person name="Nandakumar J."/>
            <person name="Davies O.R."/>
            <person name="Shibuya H."/>
        </authorList>
    </citation>
    <scope>INTERACTION WITH BRCA2</scope>
</reference>
<reference key="13">
    <citation type="journal article" date="2018" name="Commun. Biol.">
        <title>Evolutionarily-conserved MZIP2 is essential for crossover formation in mammalian meiosis.</title>
        <authorList>
            <person name="Zhang Q."/>
            <person name="Shao J."/>
            <person name="Fan H.Y."/>
            <person name="Yu C."/>
        </authorList>
    </citation>
    <scope>SUBCELLULAR LOCATION</scope>
</reference>
<reference key="14">
    <citation type="journal article" date="2019" name="Nucleic Acids Res.">
        <title>SCRE serves as a unique synaptonemal complex fastener and is essential for progression of meiosis prophase I in mice.</title>
        <authorList>
            <person name="Liu H."/>
            <person name="Huang T."/>
            <person name="Li M."/>
            <person name="Li M."/>
            <person name="Zhang C."/>
            <person name="Jiang J."/>
            <person name="Yu X."/>
            <person name="Yin Y."/>
            <person name="Zhang F."/>
            <person name="Lu G."/>
            <person name="Luo M.C."/>
            <person name="Zhang L.R."/>
            <person name="Li J."/>
            <person name="Liu K."/>
            <person name="Chen Z.J."/>
        </authorList>
    </citation>
    <scope>SUBCELLULAR LOCATION</scope>
</reference>
<reference key="15">
    <citation type="journal article" date="2019" name="Sci. Adv.">
        <title>SPO16 binds SHOC1 to promote homologous recombination and crossing-over in meiotic prophase I.</title>
        <authorList>
            <person name="Zhang Q."/>
            <person name="Ji S.Y."/>
            <person name="Busayavalasa K."/>
            <person name="Yu C."/>
        </authorList>
    </citation>
    <scope>SUBCELLULAR LOCATION</scope>
</reference>
<reference key="16">
    <citation type="journal article" date="2020" name="Nucleic Acids Res.">
        <title>MEIOK21: a new component of meiotic recombination bridges required for spermatogenesis.</title>
        <authorList>
            <person name="Shang Y."/>
            <person name="Huang T."/>
            <person name="Liu H."/>
            <person name="Liu Y."/>
            <person name="Liang H."/>
            <person name="Yu X."/>
            <person name="Li M."/>
            <person name="Zhai B."/>
            <person name="Yang X."/>
            <person name="Wei Y."/>
            <person name="Wang G."/>
            <person name="Chen Z."/>
            <person name="Wang S."/>
            <person name="Zhang L."/>
        </authorList>
    </citation>
    <scope>SUBCELLULAR LOCATION</scope>
</reference>
<reference key="17">
    <citation type="journal article" date="2022" name="Front. Cell Dev. Biol.">
        <title>TMPRSS12 Functions in Meiosis and Spermiogenesis and Is Required for Male Fertility in Mice.</title>
        <authorList>
            <person name="Zhang J."/>
            <person name="Zhou X."/>
            <person name="Wan D."/>
            <person name="Yu L."/>
            <person name="Chen X."/>
            <person name="Yan T."/>
            <person name="Wu Z."/>
            <person name="Zheng M."/>
            <person name="Zhu F."/>
            <person name="Zhu H."/>
        </authorList>
    </citation>
    <scope>TISSUE SPECIFICITY</scope>
</reference>
<proteinExistence type="evidence at protein level"/>
<organism>
    <name type="scientific">Mus musculus</name>
    <name type="common">Mouse</name>
    <dbReference type="NCBI Taxonomy" id="10090"/>
    <lineage>
        <taxon>Eukaryota</taxon>
        <taxon>Metazoa</taxon>
        <taxon>Chordata</taxon>
        <taxon>Craniata</taxon>
        <taxon>Vertebrata</taxon>
        <taxon>Euteleostomi</taxon>
        <taxon>Mammalia</taxon>
        <taxon>Eutheria</taxon>
        <taxon>Euarchontoglires</taxon>
        <taxon>Glires</taxon>
        <taxon>Rodentia</taxon>
        <taxon>Myomorpha</taxon>
        <taxon>Muroidea</taxon>
        <taxon>Muridae</taxon>
        <taxon>Murinae</taxon>
        <taxon>Mus</taxon>
        <taxon>Mus</taxon>
    </lineage>
</organism>
<protein>
    <recommendedName>
        <fullName evidence="17">DNA repair protein RAD51 homolog 1</fullName>
    </recommendedName>
    <alternativeName>
        <fullName>RAD51 homolog A</fullName>
    </alternativeName>
</protein>